<accession>Q30PN2</accession>
<proteinExistence type="inferred from homology"/>
<gene>
    <name evidence="1" type="primary">ndk</name>
    <name type="ordered locus">Suden_1775</name>
</gene>
<organism>
    <name type="scientific">Sulfurimonas denitrificans (strain ATCC 33889 / DSM 1251)</name>
    <name type="common">Thiomicrospira denitrificans (strain ATCC 33889 / DSM 1251)</name>
    <dbReference type="NCBI Taxonomy" id="326298"/>
    <lineage>
        <taxon>Bacteria</taxon>
        <taxon>Pseudomonadati</taxon>
        <taxon>Campylobacterota</taxon>
        <taxon>Epsilonproteobacteria</taxon>
        <taxon>Campylobacterales</taxon>
        <taxon>Sulfurimonadaceae</taxon>
        <taxon>Sulfurimonas</taxon>
    </lineage>
</organism>
<keyword id="KW-0067">ATP-binding</keyword>
<keyword id="KW-0963">Cytoplasm</keyword>
<keyword id="KW-0418">Kinase</keyword>
<keyword id="KW-0460">Magnesium</keyword>
<keyword id="KW-0479">Metal-binding</keyword>
<keyword id="KW-0546">Nucleotide metabolism</keyword>
<keyword id="KW-0547">Nucleotide-binding</keyword>
<keyword id="KW-0597">Phosphoprotein</keyword>
<keyword id="KW-1185">Reference proteome</keyword>
<keyword id="KW-0808">Transferase</keyword>
<name>NDK_SULDN</name>
<evidence type="ECO:0000255" key="1">
    <source>
        <dbReference type="HAMAP-Rule" id="MF_00451"/>
    </source>
</evidence>
<sequence>MERTLSIIKPDAVAKGVVGKILDRFESNGLKIAATRKMQLSRADAEAFYAVHSERPFFGDLVDFMISGPVVVSVLEGEGALIKNRNLMGATNPKEAEAGTIRADFAENIDANAVHGSDSLENAAVEIAFFFSEREIS</sequence>
<dbReference type="EC" id="2.7.4.6" evidence="1"/>
<dbReference type="EMBL" id="CP000153">
    <property type="protein sequence ID" value="ABB45049.1"/>
    <property type="molecule type" value="Genomic_DNA"/>
</dbReference>
<dbReference type="RefSeq" id="WP_011373389.1">
    <property type="nucleotide sequence ID" value="NC_007575.1"/>
</dbReference>
<dbReference type="SMR" id="Q30PN2"/>
<dbReference type="STRING" id="326298.Suden_1775"/>
<dbReference type="KEGG" id="tdn:Suden_1775"/>
<dbReference type="eggNOG" id="COG0105">
    <property type="taxonomic scope" value="Bacteria"/>
</dbReference>
<dbReference type="HOGENOM" id="CLU_060216_8_1_7"/>
<dbReference type="OrthoDB" id="9801161at2"/>
<dbReference type="Proteomes" id="UP000002714">
    <property type="component" value="Chromosome"/>
</dbReference>
<dbReference type="GO" id="GO:0005737">
    <property type="term" value="C:cytoplasm"/>
    <property type="evidence" value="ECO:0007669"/>
    <property type="project" value="UniProtKB-SubCell"/>
</dbReference>
<dbReference type="GO" id="GO:0005524">
    <property type="term" value="F:ATP binding"/>
    <property type="evidence" value="ECO:0007669"/>
    <property type="project" value="UniProtKB-UniRule"/>
</dbReference>
<dbReference type="GO" id="GO:0046872">
    <property type="term" value="F:metal ion binding"/>
    <property type="evidence" value="ECO:0007669"/>
    <property type="project" value="UniProtKB-KW"/>
</dbReference>
<dbReference type="GO" id="GO:0004550">
    <property type="term" value="F:nucleoside diphosphate kinase activity"/>
    <property type="evidence" value="ECO:0007669"/>
    <property type="project" value="UniProtKB-UniRule"/>
</dbReference>
<dbReference type="GO" id="GO:0006241">
    <property type="term" value="P:CTP biosynthetic process"/>
    <property type="evidence" value="ECO:0007669"/>
    <property type="project" value="UniProtKB-UniRule"/>
</dbReference>
<dbReference type="GO" id="GO:0006183">
    <property type="term" value="P:GTP biosynthetic process"/>
    <property type="evidence" value="ECO:0007669"/>
    <property type="project" value="UniProtKB-UniRule"/>
</dbReference>
<dbReference type="GO" id="GO:0006228">
    <property type="term" value="P:UTP biosynthetic process"/>
    <property type="evidence" value="ECO:0007669"/>
    <property type="project" value="UniProtKB-UniRule"/>
</dbReference>
<dbReference type="CDD" id="cd04413">
    <property type="entry name" value="NDPk_I"/>
    <property type="match status" value="1"/>
</dbReference>
<dbReference type="FunFam" id="3.30.70.141:FF:000001">
    <property type="entry name" value="Nucleoside diphosphate kinase"/>
    <property type="match status" value="1"/>
</dbReference>
<dbReference type="Gene3D" id="3.30.70.141">
    <property type="entry name" value="Nucleoside diphosphate kinase-like domain"/>
    <property type="match status" value="1"/>
</dbReference>
<dbReference type="HAMAP" id="MF_00451">
    <property type="entry name" value="NDP_kinase"/>
    <property type="match status" value="1"/>
</dbReference>
<dbReference type="InterPro" id="IPR034907">
    <property type="entry name" value="NDK-like_dom"/>
</dbReference>
<dbReference type="InterPro" id="IPR036850">
    <property type="entry name" value="NDK-like_dom_sf"/>
</dbReference>
<dbReference type="InterPro" id="IPR001564">
    <property type="entry name" value="Nucleoside_diP_kinase"/>
</dbReference>
<dbReference type="InterPro" id="IPR023005">
    <property type="entry name" value="Nucleoside_diP_kinase_AS"/>
</dbReference>
<dbReference type="NCBIfam" id="NF001908">
    <property type="entry name" value="PRK00668.1"/>
    <property type="match status" value="1"/>
</dbReference>
<dbReference type="PANTHER" id="PTHR46161">
    <property type="entry name" value="NUCLEOSIDE DIPHOSPHATE KINASE"/>
    <property type="match status" value="1"/>
</dbReference>
<dbReference type="PANTHER" id="PTHR46161:SF3">
    <property type="entry name" value="NUCLEOSIDE DIPHOSPHATE KINASE DDB_G0292928-RELATED"/>
    <property type="match status" value="1"/>
</dbReference>
<dbReference type="Pfam" id="PF00334">
    <property type="entry name" value="NDK"/>
    <property type="match status" value="1"/>
</dbReference>
<dbReference type="PRINTS" id="PR01243">
    <property type="entry name" value="NUCDPKINASE"/>
</dbReference>
<dbReference type="SMART" id="SM00562">
    <property type="entry name" value="NDK"/>
    <property type="match status" value="1"/>
</dbReference>
<dbReference type="SUPFAM" id="SSF54919">
    <property type="entry name" value="Nucleoside diphosphate kinase, NDK"/>
    <property type="match status" value="1"/>
</dbReference>
<dbReference type="PROSITE" id="PS00469">
    <property type="entry name" value="NDPK"/>
    <property type="match status" value="1"/>
</dbReference>
<dbReference type="PROSITE" id="PS51374">
    <property type="entry name" value="NDPK_LIKE"/>
    <property type="match status" value="1"/>
</dbReference>
<feature type="chain" id="PRO_0000242524" description="Nucleoside diphosphate kinase">
    <location>
        <begin position="1"/>
        <end position="137"/>
    </location>
</feature>
<feature type="active site" description="Pros-phosphohistidine intermediate" evidence="1">
    <location>
        <position position="115"/>
    </location>
</feature>
<feature type="binding site" evidence="1">
    <location>
        <position position="9"/>
    </location>
    <ligand>
        <name>ATP</name>
        <dbReference type="ChEBI" id="CHEBI:30616"/>
    </ligand>
</feature>
<feature type="binding site" evidence="1">
    <location>
        <position position="57"/>
    </location>
    <ligand>
        <name>ATP</name>
        <dbReference type="ChEBI" id="CHEBI:30616"/>
    </ligand>
</feature>
<feature type="binding site" evidence="1">
    <location>
        <position position="85"/>
    </location>
    <ligand>
        <name>ATP</name>
        <dbReference type="ChEBI" id="CHEBI:30616"/>
    </ligand>
</feature>
<feature type="binding site" evidence="1">
    <location>
        <position position="91"/>
    </location>
    <ligand>
        <name>ATP</name>
        <dbReference type="ChEBI" id="CHEBI:30616"/>
    </ligand>
</feature>
<feature type="binding site" evidence="1">
    <location>
        <position position="102"/>
    </location>
    <ligand>
        <name>ATP</name>
        <dbReference type="ChEBI" id="CHEBI:30616"/>
    </ligand>
</feature>
<feature type="binding site" evidence="1">
    <location>
        <position position="112"/>
    </location>
    <ligand>
        <name>ATP</name>
        <dbReference type="ChEBI" id="CHEBI:30616"/>
    </ligand>
</feature>
<protein>
    <recommendedName>
        <fullName evidence="1">Nucleoside diphosphate kinase</fullName>
        <shortName evidence="1">NDK</shortName>
        <shortName evidence="1">NDP kinase</shortName>
        <ecNumber evidence="1">2.7.4.6</ecNumber>
    </recommendedName>
    <alternativeName>
        <fullName evidence="1">Nucleoside-2-P kinase</fullName>
    </alternativeName>
</protein>
<reference key="1">
    <citation type="journal article" date="2008" name="Appl. Environ. Microbiol.">
        <title>Genome of the epsilonproteobacterial chemolithoautotroph Sulfurimonas denitrificans.</title>
        <authorList>
            <person name="Sievert S.M."/>
            <person name="Scott K.M."/>
            <person name="Klotz M.G."/>
            <person name="Chain P.S.G."/>
            <person name="Hauser L.J."/>
            <person name="Hemp J."/>
            <person name="Huegler M."/>
            <person name="Land M."/>
            <person name="Lapidus A."/>
            <person name="Larimer F.W."/>
            <person name="Lucas S."/>
            <person name="Malfatti S.A."/>
            <person name="Meyer F."/>
            <person name="Paulsen I.T."/>
            <person name="Ren Q."/>
            <person name="Simon J."/>
            <person name="Bailey K."/>
            <person name="Diaz E."/>
            <person name="Fitzpatrick K.A."/>
            <person name="Glover B."/>
            <person name="Gwatney N."/>
            <person name="Korajkic A."/>
            <person name="Long A."/>
            <person name="Mobberley J.M."/>
            <person name="Pantry S.N."/>
            <person name="Pazder G."/>
            <person name="Peterson S."/>
            <person name="Quintanilla J.D."/>
            <person name="Sprinkle R."/>
            <person name="Stephens J."/>
            <person name="Thomas P."/>
            <person name="Vaughn R."/>
            <person name="Weber M.J."/>
            <person name="Wooten L.L."/>
        </authorList>
    </citation>
    <scope>NUCLEOTIDE SEQUENCE [LARGE SCALE GENOMIC DNA]</scope>
    <source>
        <strain>ATCC 33889 / DSM 1251</strain>
    </source>
</reference>
<comment type="function">
    <text evidence="1">Major role in the synthesis of nucleoside triphosphates other than ATP. The ATP gamma phosphate is transferred to the NDP beta phosphate via a ping-pong mechanism, using a phosphorylated active-site intermediate.</text>
</comment>
<comment type="catalytic activity">
    <reaction evidence="1">
        <text>a 2'-deoxyribonucleoside 5'-diphosphate + ATP = a 2'-deoxyribonucleoside 5'-triphosphate + ADP</text>
        <dbReference type="Rhea" id="RHEA:44640"/>
        <dbReference type="ChEBI" id="CHEBI:30616"/>
        <dbReference type="ChEBI" id="CHEBI:61560"/>
        <dbReference type="ChEBI" id="CHEBI:73316"/>
        <dbReference type="ChEBI" id="CHEBI:456216"/>
        <dbReference type="EC" id="2.7.4.6"/>
    </reaction>
</comment>
<comment type="catalytic activity">
    <reaction evidence="1">
        <text>a ribonucleoside 5'-diphosphate + ATP = a ribonucleoside 5'-triphosphate + ADP</text>
        <dbReference type="Rhea" id="RHEA:18113"/>
        <dbReference type="ChEBI" id="CHEBI:30616"/>
        <dbReference type="ChEBI" id="CHEBI:57930"/>
        <dbReference type="ChEBI" id="CHEBI:61557"/>
        <dbReference type="ChEBI" id="CHEBI:456216"/>
        <dbReference type="EC" id="2.7.4.6"/>
    </reaction>
</comment>
<comment type="cofactor">
    <cofactor evidence="1">
        <name>Mg(2+)</name>
        <dbReference type="ChEBI" id="CHEBI:18420"/>
    </cofactor>
</comment>
<comment type="subunit">
    <text evidence="1">Homotetramer.</text>
</comment>
<comment type="subcellular location">
    <subcellularLocation>
        <location evidence="1">Cytoplasm</location>
    </subcellularLocation>
</comment>
<comment type="similarity">
    <text evidence="1">Belongs to the NDK family.</text>
</comment>